<dbReference type="EC" id="4.2.1.11" evidence="1"/>
<dbReference type="EMBL" id="CP000492">
    <property type="protein sequence ID" value="ABL64290.1"/>
    <property type="molecule type" value="Genomic_DNA"/>
</dbReference>
<dbReference type="RefSeq" id="WP_011744130.1">
    <property type="nucleotide sequence ID" value="NC_008639.1"/>
</dbReference>
<dbReference type="SMR" id="A1BD13"/>
<dbReference type="STRING" id="290317.Cpha266_0223"/>
<dbReference type="KEGG" id="cph:Cpha266_0223"/>
<dbReference type="eggNOG" id="COG0148">
    <property type="taxonomic scope" value="Bacteria"/>
</dbReference>
<dbReference type="HOGENOM" id="CLU_031223_2_1_10"/>
<dbReference type="OrthoDB" id="9804716at2"/>
<dbReference type="UniPathway" id="UPA00109">
    <property type="reaction ID" value="UER00187"/>
</dbReference>
<dbReference type="Proteomes" id="UP000008701">
    <property type="component" value="Chromosome"/>
</dbReference>
<dbReference type="GO" id="GO:0009986">
    <property type="term" value="C:cell surface"/>
    <property type="evidence" value="ECO:0007669"/>
    <property type="project" value="UniProtKB-SubCell"/>
</dbReference>
<dbReference type="GO" id="GO:0005576">
    <property type="term" value="C:extracellular region"/>
    <property type="evidence" value="ECO:0007669"/>
    <property type="project" value="UniProtKB-SubCell"/>
</dbReference>
<dbReference type="GO" id="GO:0000015">
    <property type="term" value="C:phosphopyruvate hydratase complex"/>
    <property type="evidence" value="ECO:0007669"/>
    <property type="project" value="InterPro"/>
</dbReference>
<dbReference type="GO" id="GO:0000287">
    <property type="term" value="F:magnesium ion binding"/>
    <property type="evidence" value="ECO:0007669"/>
    <property type="project" value="UniProtKB-UniRule"/>
</dbReference>
<dbReference type="GO" id="GO:0004634">
    <property type="term" value="F:phosphopyruvate hydratase activity"/>
    <property type="evidence" value="ECO:0007669"/>
    <property type="project" value="UniProtKB-UniRule"/>
</dbReference>
<dbReference type="GO" id="GO:0006096">
    <property type="term" value="P:glycolytic process"/>
    <property type="evidence" value="ECO:0007669"/>
    <property type="project" value="UniProtKB-UniRule"/>
</dbReference>
<dbReference type="CDD" id="cd03313">
    <property type="entry name" value="enolase"/>
    <property type="match status" value="1"/>
</dbReference>
<dbReference type="FunFam" id="3.20.20.120:FF:000001">
    <property type="entry name" value="Enolase"/>
    <property type="match status" value="1"/>
</dbReference>
<dbReference type="FunFam" id="3.30.390.10:FF:000001">
    <property type="entry name" value="Enolase"/>
    <property type="match status" value="1"/>
</dbReference>
<dbReference type="Gene3D" id="3.20.20.120">
    <property type="entry name" value="Enolase-like C-terminal domain"/>
    <property type="match status" value="1"/>
</dbReference>
<dbReference type="Gene3D" id="3.30.390.10">
    <property type="entry name" value="Enolase-like, N-terminal domain"/>
    <property type="match status" value="1"/>
</dbReference>
<dbReference type="HAMAP" id="MF_00318">
    <property type="entry name" value="Enolase"/>
    <property type="match status" value="1"/>
</dbReference>
<dbReference type="InterPro" id="IPR000941">
    <property type="entry name" value="Enolase"/>
</dbReference>
<dbReference type="InterPro" id="IPR036849">
    <property type="entry name" value="Enolase-like_C_sf"/>
</dbReference>
<dbReference type="InterPro" id="IPR029017">
    <property type="entry name" value="Enolase-like_N"/>
</dbReference>
<dbReference type="InterPro" id="IPR020810">
    <property type="entry name" value="Enolase_C"/>
</dbReference>
<dbReference type="InterPro" id="IPR020809">
    <property type="entry name" value="Enolase_CS"/>
</dbReference>
<dbReference type="InterPro" id="IPR020811">
    <property type="entry name" value="Enolase_N"/>
</dbReference>
<dbReference type="NCBIfam" id="TIGR01060">
    <property type="entry name" value="eno"/>
    <property type="match status" value="1"/>
</dbReference>
<dbReference type="PANTHER" id="PTHR11902">
    <property type="entry name" value="ENOLASE"/>
    <property type="match status" value="1"/>
</dbReference>
<dbReference type="PANTHER" id="PTHR11902:SF1">
    <property type="entry name" value="ENOLASE"/>
    <property type="match status" value="1"/>
</dbReference>
<dbReference type="Pfam" id="PF00113">
    <property type="entry name" value="Enolase_C"/>
    <property type="match status" value="1"/>
</dbReference>
<dbReference type="Pfam" id="PF03952">
    <property type="entry name" value="Enolase_N"/>
    <property type="match status" value="1"/>
</dbReference>
<dbReference type="PIRSF" id="PIRSF001400">
    <property type="entry name" value="Enolase"/>
    <property type="match status" value="1"/>
</dbReference>
<dbReference type="PRINTS" id="PR00148">
    <property type="entry name" value="ENOLASE"/>
</dbReference>
<dbReference type="SFLD" id="SFLDF00002">
    <property type="entry name" value="enolase"/>
    <property type="match status" value="1"/>
</dbReference>
<dbReference type="SFLD" id="SFLDG00178">
    <property type="entry name" value="enolase"/>
    <property type="match status" value="1"/>
</dbReference>
<dbReference type="SMART" id="SM01192">
    <property type="entry name" value="Enolase_C"/>
    <property type="match status" value="1"/>
</dbReference>
<dbReference type="SMART" id="SM01193">
    <property type="entry name" value="Enolase_N"/>
    <property type="match status" value="1"/>
</dbReference>
<dbReference type="SUPFAM" id="SSF51604">
    <property type="entry name" value="Enolase C-terminal domain-like"/>
    <property type="match status" value="1"/>
</dbReference>
<dbReference type="SUPFAM" id="SSF54826">
    <property type="entry name" value="Enolase N-terminal domain-like"/>
    <property type="match status" value="1"/>
</dbReference>
<dbReference type="PROSITE" id="PS00164">
    <property type="entry name" value="ENOLASE"/>
    <property type="match status" value="1"/>
</dbReference>
<protein>
    <recommendedName>
        <fullName evidence="1">Enolase</fullName>
        <ecNumber evidence="1">4.2.1.11</ecNumber>
    </recommendedName>
    <alternativeName>
        <fullName evidence="1">2-phospho-D-glycerate hydro-lyase</fullName>
    </alternativeName>
    <alternativeName>
        <fullName evidence="1">2-phosphoglycerate dehydratase</fullName>
    </alternativeName>
</protein>
<evidence type="ECO:0000255" key="1">
    <source>
        <dbReference type="HAMAP-Rule" id="MF_00318"/>
    </source>
</evidence>
<gene>
    <name evidence="1" type="primary">eno</name>
    <name type="ordered locus">Cpha266_0223</name>
</gene>
<organism>
    <name type="scientific">Chlorobium phaeobacteroides (strain DSM 266 / SMG 266 / 2430)</name>
    <dbReference type="NCBI Taxonomy" id="290317"/>
    <lineage>
        <taxon>Bacteria</taxon>
        <taxon>Pseudomonadati</taxon>
        <taxon>Chlorobiota</taxon>
        <taxon>Chlorobiia</taxon>
        <taxon>Chlorobiales</taxon>
        <taxon>Chlorobiaceae</taxon>
        <taxon>Chlorobium/Pelodictyon group</taxon>
        <taxon>Chlorobium</taxon>
    </lineage>
</organism>
<sequence length="437" mass="46922">MPIIRKILARQILDSRGNPTVEVDVYTENSFGRAAVPSGASTGVHEAVELRDGDSAVYLGKGVLKAVDHVNTVINDRLKGMFVTDQEEIDMAMLALDGTPNKSRLGANALLGVSMACAKAGAEYSGLPLYRYIGGTMANTLPVPMMNVLNGGAHADNTVDFQEFMIMPVGFSSYSDALRSGAEIFHALKSLLKSKGLSTAVGDEGGFAPNLKSNEEAIELVIEAVGKAGYKIGSSTANGGLGDAQVMIALDPASSEFYDAAKQKYVFKKSSKQELSSLEMAEYWEKWASDYPIISIEDGMAEDDWDGWKILTDKIGSRVQLVGDDLFVTNTSRLALGIERGVGNSILVKVNQIGTLTETLQAIDLARRNGYTAVISHRSGETEDSTIAQIAVATNAGQIKTGSLSRSDRMAKYNELLRIEEELGLQAKYPALSAFRV</sequence>
<reference key="1">
    <citation type="submission" date="2006-12" db="EMBL/GenBank/DDBJ databases">
        <title>Complete sequence of Chlorobium phaeobacteroides DSM 266.</title>
        <authorList>
            <consortium name="US DOE Joint Genome Institute"/>
            <person name="Copeland A."/>
            <person name="Lucas S."/>
            <person name="Lapidus A."/>
            <person name="Barry K."/>
            <person name="Detter J.C."/>
            <person name="Glavina del Rio T."/>
            <person name="Hammon N."/>
            <person name="Israni S."/>
            <person name="Pitluck S."/>
            <person name="Goltsman E."/>
            <person name="Schmutz J."/>
            <person name="Larimer F."/>
            <person name="Land M."/>
            <person name="Hauser L."/>
            <person name="Mikhailova N."/>
            <person name="Li T."/>
            <person name="Overmann J."/>
            <person name="Bryant D.A."/>
            <person name="Richardson P."/>
        </authorList>
    </citation>
    <scope>NUCLEOTIDE SEQUENCE [LARGE SCALE GENOMIC DNA]</scope>
    <source>
        <strain>DSM 266 / SMG 266 / 2430</strain>
    </source>
</reference>
<keyword id="KW-0963">Cytoplasm</keyword>
<keyword id="KW-0324">Glycolysis</keyword>
<keyword id="KW-0456">Lyase</keyword>
<keyword id="KW-0460">Magnesium</keyword>
<keyword id="KW-0479">Metal-binding</keyword>
<keyword id="KW-1185">Reference proteome</keyword>
<keyword id="KW-0964">Secreted</keyword>
<feature type="chain" id="PRO_0000280842" description="Enolase">
    <location>
        <begin position="1"/>
        <end position="437"/>
    </location>
</feature>
<feature type="active site" description="Proton donor" evidence="1">
    <location>
        <position position="204"/>
    </location>
</feature>
<feature type="active site" description="Proton acceptor" evidence="1">
    <location>
        <position position="349"/>
    </location>
</feature>
<feature type="binding site" evidence="1">
    <location>
        <position position="162"/>
    </location>
    <ligand>
        <name>(2R)-2-phosphoglycerate</name>
        <dbReference type="ChEBI" id="CHEBI:58289"/>
    </ligand>
</feature>
<feature type="binding site" evidence="1">
    <location>
        <position position="251"/>
    </location>
    <ligand>
        <name>Mg(2+)</name>
        <dbReference type="ChEBI" id="CHEBI:18420"/>
    </ligand>
</feature>
<feature type="binding site" evidence="1">
    <location>
        <position position="297"/>
    </location>
    <ligand>
        <name>Mg(2+)</name>
        <dbReference type="ChEBI" id="CHEBI:18420"/>
    </ligand>
</feature>
<feature type="binding site" evidence="1">
    <location>
        <position position="324"/>
    </location>
    <ligand>
        <name>Mg(2+)</name>
        <dbReference type="ChEBI" id="CHEBI:18420"/>
    </ligand>
</feature>
<feature type="binding site" evidence="1">
    <location>
        <position position="349"/>
    </location>
    <ligand>
        <name>(2R)-2-phosphoglycerate</name>
        <dbReference type="ChEBI" id="CHEBI:58289"/>
    </ligand>
</feature>
<feature type="binding site" evidence="1">
    <location>
        <position position="378"/>
    </location>
    <ligand>
        <name>(2R)-2-phosphoglycerate</name>
        <dbReference type="ChEBI" id="CHEBI:58289"/>
    </ligand>
</feature>
<feature type="binding site" evidence="1">
    <location>
        <position position="379"/>
    </location>
    <ligand>
        <name>(2R)-2-phosphoglycerate</name>
        <dbReference type="ChEBI" id="CHEBI:58289"/>
    </ligand>
</feature>
<feature type="binding site" evidence="1">
    <location>
        <position position="400"/>
    </location>
    <ligand>
        <name>(2R)-2-phosphoglycerate</name>
        <dbReference type="ChEBI" id="CHEBI:58289"/>
    </ligand>
</feature>
<comment type="function">
    <text evidence="1">Catalyzes the reversible conversion of 2-phosphoglycerate (2-PG) into phosphoenolpyruvate (PEP). It is essential for the degradation of carbohydrates via glycolysis.</text>
</comment>
<comment type="catalytic activity">
    <reaction evidence="1">
        <text>(2R)-2-phosphoglycerate = phosphoenolpyruvate + H2O</text>
        <dbReference type="Rhea" id="RHEA:10164"/>
        <dbReference type="ChEBI" id="CHEBI:15377"/>
        <dbReference type="ChEBI" id="CHEBI:58289"/>
        <dbReference type="ChEBI" id="CHEBI:58702"/>
        <dbReference type="EC" id="4.2.1.11"/>
    </reaction>
</comment>
<comment type="cofactor">
    <cofactor evidence="1">
        <name>Mg(2+)</name>
        <dbReference type="ChEBI" id="CHEBI:18420"/>
    </cofactor>
    <text evidence="1">Binds a second Mg(2+) ion via substrate during catalysis.</text>
</comment>
<comment type="pathway">
    <text evidence="1">Carbohydrate degradation; glycolysis; pyruvate from D-glyceraldehyde 3-phosphate: step 4/5.</text>
</comment>
<comment type="subcellular location">
    <subcellularLocation>
        <location evidence="1">Cytoplasm</location>
    </subcellularLocation>
    <subcellularLocation>
        <location evidence="1">Secreted</location>
    </subcellularLocation>
    <subcellularLocation>
        <location evidence="1">Cell surface</location>
    </subcellularLocation>
    <text evidence="1">Fractions of enolase are present in both the cytoplasm and on the cell surface.</text>
</comment>
<comment type="similarity">
    <text evidence="1">Belongs to the enolase family.</text>
</comment>
<name>ENO_CHLPD</name>
<accession>A1BD13</accession>
<proteinExistence type="inferred from homology"/>